<accession>B4SZN8</accession>
<reference key="1">
    <citation type="journal article" date="2011" name="J. Bacteriol.">
        <title>Comparative genomics of 28 Salmonella enterica isolates: evidence for CRISPR-mediated adaptive sublineage evolution.</title>
        <authorList>
            <person name="Fricke W.F."/>
            <person name="Mammel M.K."/>
            <person name="McDermott P.F."/>
            <person name="Tartera C."/>
            <person name="White D.G."/>
            <person name="Leclerc J.E."/>
            <person name="Ravel J."/>
            <person name="Cebula T.A."/>
        </authorList>
    </citation>
    <scope>NUCLEOTIDE SEQUENCE [LARGE SCALE GENOMIC DNA]</scope>
    <source>
        <strain>SL254</strain>
    </source>
</reference>
<gene>
    <name evidence="1" type="primary">accD</name>
    <name type="ordered locus">SNSL254_A2554</name>
</gene>
<comment type="function">
    <text evidence="1">Component of the acetyl coenzyme A carboxylase (ACC) complex. Biotin carboxylase (BC) catalyzes the carboxylation of biotin on its carrier protein (BCCP) and then the CO(2) group is transferred by the transcarboxylase to acetyl-CoA to form malonyl-CoA.</text>
</comment>
<comment type="catalytic activity">
    <reaction evidence="1">
        <text>N(6)-carboxybiotinyl-L-lysyl-[protein] + acetyl-CoA = N(6)-biotinyl-L-lysyl-[protein] + malonyl-CoA</text>
        <dbReference type="Rhea" id="RHEA:54728"/>
        <dbReference type="Rhea" id="RHEA-COMP:10505"/>
        <dbReference type="Rhea" id="RHEA-COMP:10506"/>
        <dbReference type="ChEBI" id="CHEBI:57288"/>
        <dbReference type="ChEBI" id="CHEBI:57384"/>
        <dbReference type="ChEBI" id="CHEBI:83144"/>
        <dbReference type="ChEBI" id="CHEBI:83145"/>
        <dbReference type="EC" id="2.1.3.15"/>
    </reaction>
</comment>
<comment type="cofactor">
    <cofactor evidence="1">
        <name>Zn(2+)</name>
        <dbReference type="ChEBI" id="CHEBI:29105"/>
    </cofactor>
    <text evidence="1">Binds 1 zinc ion per subunit.</text>
</comment>
<comment type="pathway">
    <text evidence="1">Lipid metabolism; malonyl-CoA biosynthesis; malonyl-CoA from acetyl-CoA: step 1/1.</text>
</comment>
<comment type="subunit">
    <text evidence="1">Acetyl-CoA carboxylase is a heterohexamer composed of biotin carboxyl carrier protein (AccB), biotin carboxylase (AccC) and two subunits each of ACCase subunit alpha (AccA) and ACCase subunit beta (AccD).</text>
</comment>
<comment type="subcellular location">
    <subcellularLocation>
        <location evidence="1">Cytoplasm</location>
    </subcellularLocation>
</comment>
<comment type="similarity">
    <text evidence="1">Belongs to the AccD/PCCB family.</text>
</comment>
<name>ACCD_SALNS</name>
<dbReference type="EC" id="2.1.3.15" evidence="1"/>
<dbReference type="EMBL" id="CP001113">
    <property type="protein sequence ID" value="ACF61424.1"/>
    <property type="molecule type" value="Genomic_DNA"/>
</dbReference>
<dbReference type="RefSeq" id="WP_000118383.1">
    <property type="nucleotide sequence ID" value="NZ_CCMR01000001.1"/>
</dbReference>
<dbReference type="SMR" id="B4SZN8"/>
<dbReference type="KEGG" id="see:SNSL254_A2554"/>
<dbReference type="HOGENOM" id="CLU_015486_1_0_6"/>
<dbReference type="UniPathway" id="UPA00655">
    <property type="reaction ID" value="UER00711"/>
</dbReference>
<dbReference type="Proteomes" id="UP000008824">
    <property type="component" value="Chromosome"/>
</dbReference>
<dbReference type="GO" id="GO:0009329">
    <property type="term" value="C:acetate CoA-transferase complex"/>
    <property type="evidence" value="ECO:0007669"/>
    <property type="project" value="TreeGrafter"/>
</dbReference>
<dbReference type="GO" id="GO:0003989">
    <property type="term" value="F:acetyl-CoA carboxylase activity"/>
    <property type="evidence" value="ECO:0007669"/>
    <property type="project" value="InterPro"/>
</dbReference>
<dbReference type="GO" id="GO:0005524">
    <property type="term" value="F:ATP binding"/>
    <property type="evidence" value="ECO:0007669"/>
    <property type="project" value="UniProtKB-KW"/>
</dbReference>
<dbReference type="GO" id="GO:0016743">
    <property type="term" value="F:carboxyl- or carbamoyltransferase activity"/>
    <property type="evidence" value="ECO:0007669"/>
    <property type="project" value="UniProtKB-UniRule"/>
</dbReference>
<dbReference type="GO" id="GO:0008270">
    <property type="term" value="F:zinc ion binding"/>
    <property type="evidence" value="ECO:0007669"/>
    <property type="project" value="UniProtKB-UniRule"/>
</dbReference>
<dbReference type="GO" id="GO:0006633">
    <property type="term" value="P:fatty acid biosynthetic process"/>
    <property type="evidence" value="ECO:0007669"/>
    <property type="project" value="UniProtKB-KW"/>
</dbReference>
<dbReference type="GO" id="GO:2001295">
    <property type="term" value="P:malonyl-CoA biosynthetic process"/>
    <property type="evidence" value="ECO:0007669"/>
    <property type="project" value="UniProtKB-UniRule"/>
</dbReference>
<dbReference type="FunFam" id="3.90.226.10:FF:000013">
    <property type="entry name" value="Acetyl-coenzyme A carboxylase carboxyl transferase subunit beta"/>
    <property type="match status" value="1"/>
</dbReference>
<dbReference type="Gene3D" id="3.90.226.10">
    <property type="entry name" value="2-enoyl-CoA Hydratase, Chain A, domain 1"/>
    <property type="match status" value="1"/>
</dbReference>
<dbReference type="HAMAP" id="MF_01395">
    <property type="entry name" value="AcetylCoA_CT_beta"/>
    <property type="match status" value="1"/>
</dbReference>
<dbReference type="InterPro" id="IPR034733">
    <property type="entry name" value="AcCoA_carboxyl_beta"/>
</dbReference>
<dbReference type="InterPro" id="IPR000438">
    <property type="entry name" value="Acetyl_CoA_COase_Trfase_b_su"/>
</dbReference>
<dbReference type="InterPro" id="IPR029045">
    <property type="entry name" value="ClpP/crotonase-like_dom_sf"/>
</dbReference>
<dbReference type="InterPro" id="IPR011762">
    <property type="entry name" value="COA_CT_N"/>
</dbReference>
<dbReference type="InterPro" id="IPR041010">
    <property type="entry name" value="Znf-ACC"/>
</dbReference>
<dbReference type="NCBIfam" id="TIGR00515">
    <property type="entry name" value="accD"/>
    <property type="match status" value="1"/>
</dbReference>
<dbReference type="PANTHER" id="PTHR42995">
    <property type="entry name" value="ACETYL-COENZYME A CARBOXYLASE CARBOXYL TRANSFERASE SUBUNIT BETA, CHLOROPLASTIC"/>
    <property type="match status" value="1"/>
</dbReference>
<dbReference type="PANTHER" id="PTHR42995:SF5">
    <property type="entry name" value="ACETYL-COENZYME A CARBOXYLASE CARBOXYL TRANSFERASE SUBUNIT BETA, CHLOROPLASTIC"/>
    <property type="match status" value="1"/>
</dbReference>
<dbReference type="Pfam" id="PF01039">
    <property type="entry name" value="Carboxyl_trans"/>
    <property type="match status" value="1"/>
</dbReference>
<dbReference type="Pfam" id="PF17848">
    <property type="entry name" value="Zn_ribbon_ACC"/>
    <property type="match status" value="1"/>
</dbReference>
<dbReference type="PRINTS" id="PR01070">
    <property type="entry name" value="ACCCTRFRASEB"/>
</dbReference>
<dbReference type="SUPFAM" id="SSF52096">
    <property type="entry name" value="ClpP/crotonase"/>
    <property type="match status" value="1"/>
</dbReference>
<dbReference type="PROSITE" id="PS50980">
    <property type="entry name" value="COA_CT_NTER"/>
    <property type="match status" value="1"/>
</dbReference>
<sequence>MSWIERIKSNITPTRKASIPEGVWTKCDSCGQVLYRAELERNLEVCPKCDHHMRMSARNRLHSLLDEGSLVELGSELEPKDVLKFRDSKKYKDRLASAQKETGEKDALVVMKGTLHGMPVVAAAFEFAFMGGSMGSVVGARFVRAVEQALEDNCPLVCFSASGGARMQEALMSLMQMAKTSAALAKMQERGLPYISVLTDPTMGGVSASFAMLGDLNIAEPKALIGFAGPRVIEQTVREKLPPGFQRSEFLIEKGAIDMIVRRPEMRLKLASILAKLMNLPAPNPDAPREGVVVPPAPDQESEA</sequence>
<keyword id="KW-0067">ATP-binding</keyword>
<keyword id="KW-0963">Cytoplasm</keyword>
<keyword id="KW-0275">Fatty acid biosynthesis</keyword>
<keyword id="KW-0276">Fatty acid metabolism</keyword>
<keyword id="KW-0444">Lipid biosynthesis</keyword>
<keyword id="KW-0443">Lipid metabolism</keyword>
<keyword id="KW-0479">Metal-binding</keyword>
<keyword id="KW-0547">Nucleotide-binding</keyword>
<keyword id="KW-0808">Transferase</keyword>
<keyword id="KW-0862">Zinc</keyword>
<keyword id="KW-0863">Zinc-finger</keyword>
<feature type="chain" id="PRO_0000359055" description="Acetyl-coenzyme A carboxylase carboxyl transferase subunit beta">
    <location>
        <begin position="1"/>
        <end position="304"/>
    </location>
</feature>
<feature type="domain" description="CoA carboxyltransferase N-terminal" evidence="2">
    <location>
        <begin position="23"/>
        <end position="292"/>
    </location>
</feature>
<feature type="zinc finger region" description="C4-type" evidence="1">
    <location>
        <begin position="27"/>
        <end position="49"/>
    </location>
</feature>
<feature type="region of interest" description="Disordered" evidence="3">
    <location>
        <begin position="283"/>
        <end position="304"/>
    </location>
</feature>
<feature type="binding site" evidence="1">
    <location>
        <position position="27"/>
    </location>
    <ligand>
        <name>Zn(2+)</name>
        <dbReference type="ChEBI" id="CHEBI:29105"/>
    </ligand>
</feature>
<feature type="binding site" evidence="1">
    <location>
        <position position="30"/>
    </location>
    <ligand>
        <name>Zn(2+)</name>
        <dbReference type="ChEBI" id="CHEBI:29105"/>
    </ligand>
</feature>
<feature type="binding site" evidence="1">
    <location>
        <position position="46"/>
    </location>
    <ligand>
        <name>Zn(2+)</name>
        <dbReference type="ChEBI" id="CHEBI:29105"/>
    </ligand>
</feature>
<feature type="binding site" evidence="1">
    <location>
        <position position="49"/>
    </location>
    <ligand>
        <name>Zn(2+)</name>
        <dbReference type="ChEBI" id="CHEBI:29105"/>
    </ligand>
</feature>
<evidence type="ECO:0000255" key="1">
    <source>
        <dbReference type="HAMAP-Rule" id="MF_01395"/>
    </source>
</evidence>
<evidence type="ECO:0000255" key="2">
    <source>
        <dbReference type="PROSITE-ProRule" id="PRU01136"/>
    </source>
</evidence>
<evidence type="ECO:0000256" key="3">
    <source>
        <dbReference type="SAM" id="MobiDB-lite"/>
    </source>
</evidence>
<protein>
    <recommendedName>
        <fullName evidence="1">Acetyl-coenzyme A carboxylase carboxyl transferase subunit beta</fullName>
        <shortName evidence="1">ACCase subunit beta</shortName>
        <shortName evidence="1">Acetyl-CoA carboxylase carboxyltransferase subunit beta</shortName>
        <ecNumber evidence="1">2.1.3.15</ecNumber>
    </recommendedName>
</protein>
<proteinExistence type="inferred from homology"/>
<organism>
    <name type="scientific">Salmonella newport (strain SL254)</name>
    <dbReference type="NCBI Taxonomy" id="423368"/>
    <lineage>
        <taxon>Bacteria</taxon>
        <taxon>Pseudomonadati</taxon>
        <taxon>Pseudomonadota</taxon>
        <taxon>Gammaproteobacteria</taxon>
        <taxon>Enterobacterales</taxon>
        <taxon>Enterobacteriaceae</taxon>
        <taxon>Salmonella</taxon>
    </lineage>
</organism>